<proteinExistence type="inferred from homology"/>
<reference key="1">
    <citation type="submission" date="2006-12" db="EMBL/GenBank/DDBJ databases">
        <title>Complete sequence of Shewanella sp. W3-18-1.</title>
        <authorList>
            <consortium name="US DOE Joint Genome Institute"/>
            <person name="Copeland A."/>
            <person name="Lucas S."/>
            <person name="Lapidus A."/>
            <person name="Barry K."/>
            <person name="Detter J.C."/>
            <person name="Glavina del Rio T."/>
            <person name="Hammon N."/>
            <person name="Israni S."/>
            <person name="Dalin E."/>
            <person name="Tice H."/>
            <person name="Pitluck S."/>
            <person name="Chain P."/>
            <person name="Malfatti S."/>
            <person name="Shin M."/>
            <person name="Vergez L."/>
            <person name="Schmutz J."/>
            <person name="Larimer F."/>
            <person name="Land M."/>
            <person name="Hauser L."/>
            <person name="Kyrpides N."/>
            <person name="Lykidis A."/>
            <person name="Tiedje J."/>
            <person name="Richardson P."/>
        </authorList>
    </citation>
    <scope>NUCLEOTIDE SEQUENCE [LARGE SCALE GENOMIC DNA]</scope>
    <source>
        <strain>W3-18-1</strain>
    </source>
</reference>
<organism>
    <name type="scientific">Shewanella sp. (strain W3-18-1)</name>
    <dbReference type="NCBI Taxonomy" id="351745"/>
    <lineage>
        <taxon>Bacteria</taxon>
        <taxon>Pseudomonadati</taxon>
        <taxon>Pseudomonadota</taxon>
        <taxon>Gammaproteobacteria</taxon>
        <taxon>Alteromonadales</taxon>
        <taxon>Shewanellaceae</taxon>
        <taxon>Shewanella</taxon>
    </lineage>
</organism>
<dbReference type="EC" id="2.7.7.56" evidence="1"/>
<dbReference type="EMBL" id="CP000503">
    <property type="protein sequence ID" value="ABM23183.1"/>
    <property type="molecule type" value="Genomic_DNA"/>
</dbReference>
<dbReference type="RefSeq" id="WP_011787729.1">
    <property type="nucleotide sequence ID" value="NC_008750.1"/>
</dbReference>
<dbReference type="SMR" id="A1RET8"/>
<dbReference type="GeneID" id="67441914"/>
<dbReference type="KEGG" id="shw:Sputw3181_0332"/>
<dbReference type="HOGENOM" id="CLU_050858_0_0_6"/>
<dbReference type="Proteomes" id="UP000002597">
    <property type="component" value="Chromosome"/>
</dbReference>
<dbReference type="GO" id="GO:0000175">
    <property type="term" value="F:3'-5'-RNA exonuclease activity"/>
    <property type="evidence" value="ECO:0007669"/>
    <property type="project" value="UniProtKB-UniRule"/>
</dbReference>
<dbReference type="GO" id="GO:0000049">
    <property type="term" value="F:tRNA binding"/>
    <property type="evidence" value="ECO:0007669"/>
    <property type="project" value="UniProtKB-UniRule"/>
</dbReference>
<dbReference type="GO" id="GO:0009022">
    <property type="term" value="F:tRNA nucleotidyltransferase activity"/>
    <property type="evidence" value="ECO:0007669"/>
    <property type="project" value="UniProtKB-UniRule"/>
</dbReference>
<dbReference type="GO" id="GO:0016075">
    <property type="term" value="P:rRNA catabolic process"/>
    <property type="evidence" value="ECO:0007669"/>
    <property type="project" value="UniProtKB-UniRule"/>
</dbReference>
<dbReference type="GO" id="GO:0006364">
    <property type="term" value="P:rRNA processing"/>
    <property type="evidence" value="ECO:0007669"/>
    <property type="project" value="UniProtKB-KW"/>
</dbReference>
<dbReference type="GO" id="GO:0008033">
    <property type="term" value="P:tRNA processing"/>
    <property type="evidence" value="ECO:0007669"/>
    <property type="project" value="UniProtKB-UniRule"/>
</dbReference>
<dbReference type="CDD" id="cd11362">
    <property type="entry name" value="RNase_PH_bact"/>
    <property type="match status" value="1"/>
</dbReference>
<dbReference type="FunFam" id="3.30.230.70:FF:000003">
    <property type="entry name" value="Ribonuclease PH"/>
    <property type="match status" value="1"/>
</dbReference>
<dbReference type="Gene3D" id="3.30.230.70">
    <property type="entry name" value="GHMP Kinase, N-terminal domain"/>
    <property type="match status" value="1"/>
</dbReference>
<dbReference type="HAMAP" id="MF_00564">
    <property type="entry name" value="RNase_PH"/>
    <property type="match status" value="1"/>
</dbReference>
<dbReference type="InterPro" id="IPR001247">
    <property type="entry name" value="ExoRNase_PH_dom1"/>
</dbReference>
<dbReference type="InterPro" id="IPR015847">
    <property type="entry name" value="ExoRNase_PH_dom2"/>
</dbReference>
<dbReference type="InterPro" id="IPR036345">
    <property type="entry name" value="ExoRNase_PH_dom2_sf"/>
</dbReference>
<dbReference type="InterPro" id="IPR027408">
    <property type="entry name" value="PNPase/RNase_PH_dom_sf"/>
</dbReference>
<dbReference type="InterPro" id="IPR020568">
    <property type="entry name" value="Ribosomal_Su5_D2-typ_SF"/>
</dbReference>
<dbReference type="InterPro" id="IPR050080">
    <property type="entry name" value="RNase_PH"/>
</dbReference>
<dbReference type="InterPro" id="IPR002381">
    <property type="entry name" value="RNase_PH_bac-type"/>
</dbReference>
<dbReference type="InterPro" id="IPR018336">
    <property type="entry name" value="RNase_PH_CS"/>
</dbReference>
<dbReference type="NCBIfam" id="TIGR01966">
    <property type="entry name" value="RNasePH"/>
    <property type="match status" value="1"/>
</dbReference>
<dbReference type="PANTHER" id="PTHR11953">
    <property type="entry name" value="EXOSOME COMPLEX COMPONENT"/>
    <property type="match status" value="1"/>
</dbReference>
<dbReference type="PANTHER" id="PTHR11953:SF0">
    <property type="entry name" value="EXOSOME COMPLEX COMPONENT RRP41"/>
    <property type="match status" value="1"/>
</dbReference>
<dbReference type="Pfam" id="PF01138">
    <property type="entry name" value="RNase_PH"/>
    <property type="match status" value="1"/>
</dbReference>
<dbReference type="Pfam" id="PF03725">
    <property type="entry name" value="RNase_PH_C"/>
    <property type="match status" value="1"/>
</dbReference>
<dbReference type="SUPFAM" id="SSF55666">
    <property type="entry name" value="Ribonuclease PH domain 2-like"/>
    <property type="match status" value="1"/>
</dbReference>
<dbReference type="SUPFAM" id="SSF54211">
    <property type="entry name" value="Ribosomal protein S5 domain 2-like"/>
    <property type="match status" value="1"/>
</dbReference>
<dbReference type="PROSITE" id="PS01277">
    <property type="entry name" value="RIBONUCLEASE_PH"/>
    <property type="match status" value="1"/>
</dbReference>
<feature type="chain" id="PRO_1000024888" description="Ribonuclease PH">
    <location>
        <begin position="1"/>
        <end position="237"/>
    </location>
</feature>
<feature type="binding site" evidence="1">
    <location>
        <position position="86"/>
    </location>
    <ligand>
        <name>phosphate</name>
        <dbReference type="ChEBI" id="CHEBI:43474"/>
        <note>substrate</note>
    </ligand>
</feature>
<feature type="binding site" evidence="1">
    <location>
        <begin position="124"/>
        <end position="126"/>
    </location>
    <ligand>
        <name>phosphate</name>
        <dbReference type="ChEBI" id="CHEBI:43474"/>
        <note>substrate</note>
    </ligand>
</feature>
<protein>
    <recommendedName>
        <fullName evidence="1">Ribonuclease PH</fullName>
        <shortName evidence="1">RNase PH</shortName>
        <ecNumber evidence="1">2.7.7.56</ecNumber>
    </recommendedName>
    <alternativeName>
        <fullName evidence="1">tRNA nucleotidyltransferase</fullName>
    </alternativeName>
</protein>
<gene>
    <name evidence="1" type="primary">rph</name>
    <name type="ordered locus">Sputw3181_0332</name>
</gene>
<accession>A1RET8</accession>
<comment type="function">
    <text evidence="1">Phosphorolytic 3'-5' exoribonuclease that plays an important role in tRNA 3'-end maturation. Removes nucleotide residues following the 3'-CCA terminus of tRNAs; can also add nucleotides to the ends of RNA molecules by using nucleoside diphosphates as substrates, but this may not be physiologically important. Probably plays a role in initiation of 16S rRNA degradation (leading to ribosome degradation) during starvation.</text>
</comment>
<comment type="catalytic activity">
    <reaction evidence="1">
        <text>tRNA(n+1) + phosphate = tRNA(n) + a ribonucleoside 5'-diphosphate</text>
        <dbReference type="Rhea" id="RHEA:10628"/>
        <dbReference type="Rhea" id="RHEA-COMP:17343"/>
        <dbReference type="Rhea" id="RHEA-COMP:17344"/>
        <dbReference type="ChEBI" id="CHEBI:43474"/>
        <dbReference type="ChEBI" id="CHEBI:57930"/>
        <dbReference type="ChEBI" id="CHEBI:173114"/>
        <dbReference type="EC" id="2.7.7.56"/>
    </reaction>
</comment>
<comment type="subunit">
    <text evidence="1">Homohexameric ring arranged as a trimer of dimers.</text>
</comment>
<comment type="similarity">
    <text evidence="1">Belongs to the RNase PH family.</text>
</comment>
<evidence type="ECO:0000255" key="1">
    <source>
        <dbReference type="HAMAP-Rule" id="MF_00564"/>
    </source>
</evidence>
<keyword id="KW-0548">Nucleotidyltransferase</keyword>
<keyword id="KW-0694">RNA-binding</keyword>
<keyword id="KW-0698">rRNA processing</keyword>
<keyword id="KW-0808">Transferase</keyword>
<keyword id="KW-0819">tRNA processing</keyword>
<keyword id="KW-0820">tRNA-binding</keyword>
<name>RNPH_SHESW</name>
<sequence>MRPSNRTPAQTRPITITRQFTAHAEGSVLVEFGETKVLCTASFTEGVPRFLKGQGQGWVTAEYGMLPRSTHSRMDREAARGKQSGRTQEIQRLIGRALRACVDMKALGENTIVIDCDVIQADGGTRTASITGACVALVDALNWARGKGIIKSNPLKFLIAAVSVGIYKGEAISDLEYIEDSAAETDMNVVMTETGKIIEIQGTAEGEPFTHEELIELLGLAKNSIREIVDVQKAALN</sequence>